<protein>
    <recommendedName>
        <fullName>Steroidogenic acute regulatory protein, mitochondrial</fullName>
        <shortName>StAR</shortName>
    </recommendedName>
    <alternativeName>
        <fullName>START domain-containing protein 1</fullName>
        <shortName>StARD1</shortName>
    </alternativeName>
</protein>
<comment type="function">
    <text evidence="2">Plays a key role in steroid hormone synthesis by enhancing the metabolism of cholesterol into pregnenolone. Mediates the transfer of cholesterol from the outer mitochondrial membrane to the inner mitochondrial membrane where it is cleaved to pregnenolone (By similarity).</text>
</comment>
<comment type="catalytic activity">
    <reaction evidence="2">
        <text>cholesterol(in) = cholesterol(out)</text>
        <dbReference type="Rhea" id="RHEA:39747"/>
        <dbReference type="ChEBI" id="CHEBI:16113"/>
    </reaction>
</comment>
<comment type="pathway">
    <text evidence="2">Steroid metabolism; cholesterol metabolism.</text>
</comment>
<comment type="subunit">
    <text evidence="4">May interact with TSPO.</text>
</comment>
<comment type="subcellular location">
    <subcellularLocation>
        <location evidence="3">Mitochondrion</location>
    </subcellularLocation>
</comment>
<comment type="tissue specificity">
    <text>Highly expressed in the testis and at lower levels in the ovary, kidney and head.</text>
</comment>
<organism>
    <name type="scientific">Danio rerio</name>
    <name type="common">Zebrafish</name>
    <name type="synonym">Brachydanio rerio</name>
    <dbReference type="NCBI Taxonomy" id="7955"/>
    <lineage>
        <taxon>Eukaryota</taxon>
        <taxon>Metazoa</taxon>
        <taxon>Chordata</taxon>
        <taxon>Craniata</taxon>
        <taxon>Vertebrata</taxon>
        <taxon>Euteleostomi</taxon>
        <taxon>Actinopterygii</taxon>
        <taxon>Neopterygii</taxon>
        <taxon>Teleostei</taxon>
        <taxon>Ostariophysi</taxon>
        <taxon>Cypriniformes</taxon>
        <taxon>Danionidae</taxon>
        <taxon>Danioninae</taxon>
        <taxon>Danio</taxon>
    </lineage>
</organism>
<accession>Q9DG10</accession>
<keyword id="KW-0445">Lipid transport</keyword>
<keyword id="KW-0446">Lipid-binding</keyword>
<keyword id="KW-0496">Mitochondrion</keyword>
<keyword id="KW-1185">Reference proteome</keyword>
<keyword id="KW-0755">Steroidogenesis</keyword>
<keyword id="KW-0809">Transit peptide</keyword>
<keyword id="KW-0813">Transport</keyword>
<name>STAR_DANRE</name>
<feature type="transit peptide" description="Mitochondrion" evidence="1">
    <location>
        <begin position="1"/>
        <end position="61"/>
    </location>
</feature>
<feature type="chain" id="PRO_0000033323" description="Steroidogenic acute regulatory protein, mitochondrial">
    <location>
        <begin position="62"/>
        <end position="285"/>
    </location>
</feature>
<feature type="domain" description="START" evidence="5">
    <location>
        <begin position="65"/>
        <end position="278"/>
    </location>
</feature>
<reference key="1">
    <citation type="journal article" date="2000" name="Mol. Cell. Endocrinol.">
        <title>Conservation of steroidogenic acute regulatory (StAR) protein structure and expression in vertebrates.</title>
        <authorList>
            <person name="Bauer M.P."/>
            <person name="Bridgham J.T."/>
            <person name="Langenau D.M."/>
            <person name="Johnson A.L."/>
            <person name="Goetz F.W."/>
        </authorList>
    </citation>
    <scope>NUCLEOTIDE SEQUENCE [MRNA]</scope>
</reference>
<reference key="2">
    <citation type="submission" date="2004-07" db="EMBL/GenBank/DDBJ databases">
        <authorList>
            <consortium name="NIH - Zebrafish Gene Collection (ZGC) project"/>
        </authorList>
    </citation>
    <scope>NUCLEOTIDE SEQUENCE [LARGE SCALE MRNA]</scope>
</reference>
<gene>
    <name type="primary">star</name>
</gene>
<proteinExistence type="evidence at transcript level"/>
<dbReference type="EMBL" id="AF220435">
    <property type="protein sequence ID" value="AAG28593.1"/>
    <property type="molecule type" value="mRNA"/>
</dbReference>
<dbReference type="EMBL" id="BC075967">
    <property type="protein sequence ID" value="AAH75967.1"/>
    <property type="molecule type" value="mRNA"/>
</dbReference>
<dbReference type="RefSeq" id="NP_571738.1">
    <property type="nucleotide sequence ID" value="NM_131663.1"/>
</dbReference>
<dbReference type="SMR" id="Q9DG10"/>
<dbReference type="FunCoup" id="Q9DG10">
    <property type="interactions" value="448"/>
</dbReference>
<dbReference type="STRING" id="7955.ENSDARP00000023907"/>
<dbReference type="PaxDb" id="7955-ENSDARP00000023907"/>
<dbReference type="Ensembl" id="ENSDART00000016225">
    <property type="protein sequence ID" value="ENSDARP00000023907"/>
    <property type="gene ID" value="ENSDARG00000006137"/>
</dbReference>
<dbReference type="GeneID" id="63999"/>
<dbReference type="KEGG" id="dre:63999"/>
<dbReference type="AGR" id="ZFIN:ZDB-GENE-001120-3"/>
<dbReference type="CTD" id="6770"/>
<dbReference type="ZFIN" id="ZDB-GENE-001120-3">
    <property type="gene designation" value="star"/>
</dbReference>
<dbReference type="eggNOG" id="KOG3845">
    <property type="taxonomic scope" value="Eukaryota"/>
</dbReference>
<dbReference type="HOGENOM" id="CLU_093200_1_0_1"/>
<dbReference type="InParanoid" id="Q9DG10"/>
<dbReference type="OMA" id="CMEAMGE"/>
<dbReference type="OrthoDB" id="74575at2759"/>
<dbReference type="PhylomeDB" id="Q9DG10"/>
<dbReference type="TreeFam" id="TF313869"/>
<dbReference type="Reactome" id="R-DRE-196108">
    <property type="pathway name" value="Pregnenolone biosynthesis"/>
</dbReference>
<dbReference type="Reactome" id="R-DRE-9837999">
    <property type="pathway name" value="Mitochondrial protein degradation"/>
</dbReference>
<dbReference type="UniPathway" id="UPA00296"/>
<dbReference type="PRO" id="PR:Q9DG10"/>
<dbReference type="Proteomes" id="UP000000437">
    <property type="component" value="Chromosome 8"/>
</dbReference>
<dbReference type="Bgee" id="ENSDARG00000006137">
    <property type="expression patterns" value="Expressed in testis and 18 other cell types or tissues"/>
</dbReference>
<dbReference type="GO" id="GO:0005739">
    <property type="term" value="C:mitochondrion"/>
    <property type="evidence" value="ECO:0007669"/>
    <property type="project" value="UniProtKB-SubCell"/>
</dbReference>
<dbReference type="GO" id="GO:0015485">
    <property type="term" value="F:cholesterol binding"/>
    <property type="evidence" value="ECO:0000318"/>
    <property type="project" value="GO_Central"/>
</dbReference>
<dbReference type="GO" id="GO:0120020">
    <property type="term" value="F:cholesterol transfer activity"/>
    <property type="evidence" value="ECO:0007669"/>
    <property type="project" value="InterPro"/>
</dbReference>
<dbReference type="GO" id="GO:0008203">
    <property type="term" value="P:cholesterol metabolic process"/>
    <property type="evidence" value="ECO:0007669"/>
    <property type="project" value="UniProtKB-UniPathway"/>
</dbReference>
<dbReference type="GO" id="GO:0032367">
    <property type="term" value="P:intracellular cholesterol transport"/>
    <property type="evidence" value="ECO:0000318"/>
    <property type="project" value="GO_Central"/>
</dbReference>
<dbReference type="GO" id="GO:0001556">
    <property type="term" value="P:oocyte maturation"/>
    <property type="evidence" value="ECO:0000315"/>
    <property type="project" value="ZFIN"/>
</dbReference>
<dbReference type="GO" id="GO:0050810">
    <property type="term" value="P:regulation of steroid biosynthetic process"/>
    <property type="evidence" value="ECO:0000318"/>
    <property type="project" value="GO_Central"/>
</dbReference>
<dbReference type="GO" id="GO:0006694">
    <property type="term" value="P:steroid biosynthetic process"/>
    <property type="evidence" value="ECO:0007669"/>
    <property type="project" value="UniProtKB-KW"/>
</dbReference>
<dbReference type="CDD" id="cd08905">
    <property type="entry name" value="START_STARD1-like"/>
    <property type="match status" value="1"/>
</dbReference>
<dbReference type="FunFam" id="3.30.530.20:FF:000015">
    <property type="entry name" value="Steroidogenic acute regulatory protein, mitochondrial"/>
    <property type="match status" value="1"/>
</dbReference>
<dbReference type="Gene3D" id="3.30.530.20">
    <property type="match status" value="1"/>
</dbReference>
<dbReference type="InterPro" id="IPR029866">
    <property type="entry name" value="StAR"/>
</dbReference>
<dbReference type="InterPro" id="IPR000799">
    <property type="entry name" value="StAR-like"/>
</dbReference>
<dbReference type="InterPro" id="IPR023393">
    <property type="entry name" value="START-like_dom_sf"/>
</dbReference>
<dbReference type="InterPro" id="IPR002913">
    <property type="entry name" value="START_lipid-bd_dom"/>
</dbReference>
<dbReference type="PANTHER" id="PTHR46489">
    <property type="entry name" value="STEROIDOGENIC ACUTE REGULATORY PROTEIN, MITOCHONDRIAL"/>
    <property type="match status" value="1"/>
</dbReference>
<dbReference type="PANTHER" id="PTHR46489:SF3">
    <property type="entry name" value="STEROIDOGENIC ACUTE REGULATORY PROTEIN, MITOCHONDRIAL"/>
    <property type="match status" value="1"/>
</dbReference>
<dbReference type="Pfam" id="PF01852">
    <property type="entry name" value="START"/>
    <property type="match status" value="1"/>
</dbReference>
<dbReference type="PRINTS" id="PR00978">
    <property type="entry name" value="STARPROTEIN"/>
</dbReference>
<dbReference type="SMART" id="SM00234">
    <property type="entry name" value="START"/>
    <property type="match status" value="1"/>
</dbReference>
<dbReference type="SUPFAM" id="SSF55961">
    <property type="entry name" value="Bet v1-like"/>
    <property type="match status" value="1"/>
</dbReference>
<dbReference type="PROSITE" id="PS50848">
    <property type="entry name" value="START"/>
    <property type="match status" value="1"/>
</dbReference>
<sequence length="285" mass="31759">MLPATFKLCAGISYRHMRNMTGLRKNAMIAIHHELNKLSGPGASTWINHIRRRSSLLSSPIAEETYSEADQCYVQQGQEALQKSISILEDQDGWQTEIESINGEKVMSKVLPGIGKVFKLEVTLEQQTGDLYDELVDNMEQMGEWNPNVKQVKILQKIGQETMITHEISAETPGNVVGPRDFVNVRHAKRRGSTCFLAGMSTQHPGMPEQKGFVRAENGPTCIVMRPSADDPNKTKFTWLLSLDLKGWIPKTVINRVLSQTQVDFVNHLRDRMASGGGIDAAIAC</sequence>
<evidence type="ECO:0000250" key="1"/>
<evidence type="ECO:0000250" key="2">
    <source>
        <dbReference type="UniProtKB" id="P49675"/>
    </source>
</evidence>
<evidence type="ECO:0000250" key="3">
    <source>
        <dbReference type="UniProtKB" id="P51557"/>
    </source>
</evidence>
<evidence type="ECO:0000250" key="4">
    <source>
        <dbReference type="UniProtKB" id="P79245"/>
    </source>
</evidence>
<evidence type="ECO:0000255" key="5">
    <source>
        <dbReference type="PROSITE-ProRule" id="PRU00197"/>
    </source>
</evidence>